<accession>Q56693</accession>
<keyword id="KW-0289">Folate biosynthesis</keyword>
<keyword id="KW-0456">Lyase</keyword>
<keyword id="KW-0663">Pyridoxal phosphate</keyword>
<evidence type="ECO:0000250" key="1"/>
<evidence type="ECO:0000305" key="2"/>
<name>PABC_VIBHA</name>
<dbReference type="EC" id="4.1.3.38"/>
<dbReference type="EMBL" id="U39441">
    <property type="protein sequence ID" value="AAC43592.1"/>
    <property type="molecule type" value="Genomic_DNA"/>
</dbReference>
<dbReference type="PIR" id="T12054">
    <property type="entry name" value="T12054"/>
</dbReference>
<dbReference type="RefSeq" id="WP_069687377.1">
    <property type="nucleotide sequence ID" value="NZ_CP009467.1"/>
</dbReference>
<dbReference type="SMR" id="Q56693"/>
<dbReference type="STRING" id="669.AL538_03880"/>
<dbReference type="PATRIC" id="fig|669.65.peg.2401"/>
<dbReference type="UniPathway" id="UPA00077">
    <property type="reaction ID" value="UER00150"/>
</dbReference>
<dbReference type="GO" id="GO:0005829">
    <property type="term" value="C:cytosol"/>
    <property type="evidence" value="ECO:0007669"/>
    <property type="project" value="TreeGrafter"/>
</dbReference>
<dbReference type="GO" id="GO:0008696">
    <property type="term" value="F:4-amino-4-deoxychorismate lyase activity"/>
    <property type="evidence" value="ECO:0007669"/>
    <property type="project" value="UniProtKB-EC"/>
</dbReference>
<dbReference type="GO" id="GO:0030170">
    <property type="term" value="F:pyridoxal phosphate binding"/>
    <property type="evidence" value="ECO:0007669"/>
    <property type="project" value="InterPro"/>
</dbReference>
<dbReference type="GO" id="GO:0008153">
    <property type="term" value="P:4-aminobenzoate biosynthetic process"/>
    <property type="evidence" value="ECO:0007669"/>
    <property type="project" value="TreeGrafter"/>
</dbReference>
<dbReference type="GO" id="GO:0046656">
    <property type="term" value="P:folic acid biosynthetic process"/>
    <property type="evidence" value="ECO:0007669"/>
    <property type="project" value="UniProtKB-KW"/>
</dbReference>
<dbReference type="GO" id="GO:0046654">
    <property type="term" value="P:tetrahydrofolate biosynthetic process"/>
    <property type="evidence" value="ECO:0007669"/>
    <property type="project" value="UniProtKB-UniPathway"/>
</dbReference>
<dbReference type="CDD" id="cd01559">
    <property type="entry name" value="ADCL_like"/>
    <property type="match status" value="1"/>
</dbReference>
<dbReference type="FunFam" id="3.20.10.10:FF:000002">
    <property type="entry name" value="D-alanine aminotransferase"/>
    <property type="match status" value="1"/>
</dbReference>
<dbReference type="Gene3D" id="3.30.470.10">
    <property type="match status" value="1"/>
</dbReference>
<dbReference type="Gene3D" id="3.20.10.10">
    <property type="entry name" value="D-amino Acid Aminotransferase, subunit A, domain 2"/>
    <property type="match status" value="1"/>
</dbReference>
<dbReference type="InterPro" id="IPR017824">
    <property type="entry name" value="Aminodeoxychorismate_lyase_IV"/>
</dbReference>
<dbReference type="InterPro" id="IPR001544">
    <property type="entry name" value="Aminotrans_IV"/>
</dbReference>
<dbReference type="InterPro" id="IPR018300">
    <property type="entry name" value="Aminotrans_IV_CS"/>
</dbReference>
<dbReference type="InterPro" id="IPR036038">
    <property type="entry name" value="Aminotransferase-like"/>
</dbReference>
<dbReference type="InterPro" id="IPR043132">
    <property type="entry name" value="BCAT-like_C"/>
</dbReference>
<dbReference type="InterPro" id="IPR043131">
    <property type="entry name" value="BCAT-like_N"/>
</dbReference>
<dbReference type="InterPro" id="IPR050571">
    <property type="entry name" value="Class-IV_PLP-Dep_Aminotrnsfr"/>
</dbReference>
<dbReference type="NCBIfam" id="TIGR03461">
    <property type="entry name" value="pabC_Proteo"/>
    <property type="match status" value="1"/>
</dbReference>
<dbReference type="NCBIfam" id="NF004761">
    <property type="entry name" value="PRK06092.1"/>
    <property type="match status" value="1"/>
</dbReference>
<dbReference type="PANTHER" id="PTHR42743">
    <property type="entry name" value="AMINO-ACID AMINOTRANSFERASE"/>
    <property type="match status" value="1"/>
</dbReference>
<dbReference type="PANTHER" id="PTHR42743:SF2">
    <property type="entry name" value="AMINODEOXYCHORISMATE LYASE"/>
    <property type="match status" value="1"/>
</dbReference>
<dbReference type="Pfam" id="PF01063">
    <property type="entry name" value="Aminotran_4"/>
    <property type="match status" value="1"/>
</dbReference>
<dbReference type="SUPFAM" id="SSF56752">
    <property type="entry name" value="D-aminoacid aminotransferase-like PLP-dependent enzymes"/>
    <property type="match status" value="1"/>
</dbReference>
<dbReference type="PROSITE" id="PS00770">
    <property type="entry name" value="AA_TRANSFER_CLASS_4"/>
    <property type="match status" value="1"/>
</dbReference>
<protein>
    <recommendedName>
        <fullName>Aminodeoxychorismate lyase</fullName>
        <ecNumber>4.1.3.38</ecNumber>
    </recommendedName>
    <alternativeName>
        <fullName>4-amino-4-deoxychorismate lyase</fullName>
        <shortName>ADC lyase</shortName>
        <shortName>ADCL</shortName>
    </alternativeName>
</protein>
<comment type="function">
    <text evidence="1">Involved in the biosynthesis of p-aminobenzoate (PABA), a precursor of tetrahydrofolate. Converts 4-amino-4-deoxychorismate into 4-aminobenzoate (PABA) and pyruvate (By similarity).</text>
</comment>
<comment type="catalytic activity">
    <reaction>
        <text>4-amino-4-deoxychorismate = 4-aminobenzoate + pyruvate + H(+)</text>
        <dbReference type="Rhea" id="RHEA:16201"/>
        <dbReference type="ChEBI" id="CHEBI:15361"/>
        <dbReference type="ChEBI" id="CHEBI:15378"/>
        <dbReference type="ChEBI" id="CHEBI:17836"/>
        <dbReference type="ChEBI" id="CHEBI:58406"/>
        <dbReference type="EC" id="4.1.3.38"/>
    </reaction>
</comment>
<comment type="cofactor">
    <cofactor evidence="1">
        <name>pyridoxal 5'-phosphate</name>
        <dbReference type="ChEBI" id="CHEBI:597326"/>
    </cofactor>
</comment>
<comment type="pathway">
    <text>Cofactor biosynthesis; tetrahydrofolate biosynthesis; 4-aminobenzoate from chorismate: step 2/2.</text>
</comment>
<comment type="subunit">
    <text evidence="1">Homodimer.</text>
</comment>
<comment type="similarity">
    <text evidence="2">Belongs to the class-IV pyridoxal-phosphate-dependent aminotransferase family.</text>
</comment>
<gene>
    <name type="primary">pabC</name>
</gene>
<feature type="chain" id="PRO_0000103307" description="Aminodeoxychorismate lyase">
    <location>
        <begin position="1"/>
        <end position="271"/>
    </location>
</feature>
<feature type="modified residue" description="N6-(pyridoxal phosphate)lysine" evidence="1">
    <location>
        <position position="140"/>
    </location>
</feature>
<sequence>MFWVNGLPQTHVPLGDRSFQYGDGCFSTIKTKKGQLEHWQAHVERMEACLTTLQIPFPDWRTVLDWAMSATLKDESAGIKIHISRGCGGRGYSPSGVEGPVVTISNFSFPAHYLAWQERGVQLGVCETRLGIQPLLAGHKHNNRIEQVLAKAEIDGTEFADAVTLNVQNHVIETTMANLFWVKDEKVFTPGLCLSGVAGVMRRKVLEYLQSEGYSVQVADFTLTDLLDADEVWMCNSLLGVAPVSGISAPENKIDFPIGKLTRRLQGNLNT</sequence>
<reference key="1">
    <citation type="journal article" date="1996" name="J. Bacteriol.">
        <title>Isolation of Vibrio harveyi acyl carrier protein and the fabG, acpP, and fabF genes involved in fatty acid biosynthesis.</title>
        <authorList>
            <person name="Shen Z."/>
            <person name="Byers D.M."/>
        </authorList>
    </citation>
    <scope>NUCLEOTIDE SEQUENCE [GENOMIC DNA]</scope>
    <source>
        <strain>ATCC 33843 / NCIMB 1871 / 392 / MAV</strain>
    </source>
</reference>
<organism>
    <name type="scientific">Vibrio harveyi</name>
    <name type="common">Beneckea harveyi</name>
    <dbReference type="NCBI Taxonomy" id="669"/>
    <lineage>
        <taxon>Bacteria</taxon>
        <taxon>Pseudomonadati</taxon>
        <taxon>Pseudomonadota</taxon>
        <taxon>Gammaproteobacteria</taxon>
        <taxon>Vibrionales</taxon>
        <taxon>Vibrionaceae</taxon>
        <taxon>Vibrio</taxon>
    </lineage>
</organism>
<proteinExistence type="inferred from homology"/>